<sequence length="134" mass="14844">MNTLNLDIVTPNGSVYNRDNVELVVMQTTAGEIGVMSGHIPTVAALKTGFVKVKFHDGTEYIAVSDGFVEVRKDKVSIIVQTAETAREIDVERAKLAKARAESHLENDDDNTDIHRAERALERANNRLRVAELK</sequence>
<reference key="1">
    <citation type="book" date="2006" name="Gram positive pathogens, 2nd edition">
        <title>The Staphylococcus aureus NCTC 8325 genome.</title>
        <editorList>
            <person name="Fischetti V."/>
            <person name="Novick R."/>
            <person name="Ferretti J."/>
            <person name="Portnoy D."/>
            <person name="Rood J."/>
        </editorList>
        <authorList>
            <person name="Gillaspy A.F."/>
            <person name="Worrell V."/>
            <person name="Orvis J."/>
            <person name="Roe B.A."/>
            <person name="Dyer D.W."/>
            <person name="Iandolo J.J."/>
        </authorList>
    </citation>
    <scope>NUCLEOTIDE SEQUENCE [LARGE SCALE GENOMIC DNA]</scope>
    <source>
        <strain>NCTC 8325 / PS 47</strain>
    </source>
</reference>
<protein>
    <recommendedName>
        <fullName evidence="1">ATP synthase epsilon chain</fullName>
    </recommendedName>
    <alternativeName>
        <fullName evidence="1">ATP synthase F1 sector epsilon subunit</fullName>
    </alternativeName>
    <alternativeName>
        <fullName evidence="1">F-ATPase epsilon subunit</fullName>
    </alternativeName>
</protein>
<comment type="function">
    <text evidence="1">Produces ATP from ADP in the presence of a proton gradient across the membrane.</text>
</comment>
<comment type="subunit">
    <text>F-type ATPases have 2 components, CF(1) - the catalytic core - and CF(0) - the membrane proton channel. CF(1) has five subunits: alpha(3), beta(3), gamma(1), delta(1), epsilon(1). CF(0) has three main subunits: a, b and c.</text>
</comment>
<comment type="subcellular location">
    <subcellularLocation>
        <location evidence="1">Cell membrane</location>
        <topology evidence="1">Peripheral membrane protein</topology>
    </subcellularLocation>
</comment>
<comment type="similarity">
    <text evidence="1">Belongs to the ATPase epsilon chain family.</text>
</comment>
<organism>
    <name type="scientific">Staphylococcus aureus (strain NCTC 8325 / PS 47)</name>
    <dbReference type="NCBI Taxonomy" id="93061"/>
    <lineage>
        <taxon>Bacteria</taxon>
        <taxon>Bacillati</taxon>
        <taxon>Bacillota</taxon>
        <taxon>Bacilli</taxon>
        <taxon>Bacillales</taxon>
        <taxon>Staphylococcaceae</taxon>
        <taxon>Staphylococcus</taxon>
    </lineage>
</organism>
<gene>
    <name evidence="1" type="primary">atpC</name>
    <name type="ordered locus">SAOUHSC_02340</name>
</gene>
<dbReference type="EMBL" id="CP000253">
    <property type="protein sequence ID" value="ABD31374.1"/>
    <property type="molecule type" value="Genomic_DNA"/>
</dbReference>
<dbReference type="RefSeq" id="WP_001094394.1">
    <property type="nucleotide sequence ID" value="NZ_LS483365.1"/>
</dbReference>
<dbReference type="RefSeq" id="YP_500819.1">
    <property type="nucleotide sequence ID" value="NC_007795.1"/>
</dbReference>
<dbReference type="SMR" id="Q2FWF1"/>
<dbReference type="STRING" id="93061.SAOUHSC_02340"/>
<dbReference type="PaxDb" id="1280-SAXN108_2347"/>
<dbReference type="GeneID" id="3920965"/>
<dbReference type="KEGG" id="sao:SAOUHSC_02340"/>
<dbReference type="PATRIC" id="fig|93061.5.peg.2120"/>
<dbReference type="eggNOG" id="COG0355">
    <property type="taxonomic scope" value="Bacteria"/>
</dbReference>
<dbReference type="HOGENOM" id="CLU_084338_1_3_9"/>
<dbReference type="OrthoDB" id="9804110at2"/>
<dbReference type="PRO" id="PR:Q2FWF1"/>
<dbReference type="Proteomes" id="UP000008816">
    <property type="component" value="Chromosome"/>
</dbReference>
<dbReference type="GO" id="GO:0005886">
    <property type="term" value="C:plasma membrane"/>
    <property type="evidence" value="ECO:0007669"/>
    <property type="project" value="UniProtKB-SubCell"/>
</dbReference>
<dbReference type="GO" id="GO:0045259">
    <property type="term" value="C:proton-transporting ATP synthase complex"/>
    <property type="evidence" value="ECO:0007669"/>
    <property type="project" value="UniProtKB-KW"/>
</dbReference>
<dbReference type="GO" id="GO:0005524">
    <property type="term" value="F:ATP binding"/>
    <property type="evidence" value="ECO:0007669"/>
    <property type="project" value="UniProtKB-UniRule"/>
</dbReference>
<dbReference type="GO" id="GO:0046933">
    <property type="term" value="F:proton-transporting ATP synthase activity, rotational mechanism"/>
    <property type="evidence" value="ECO:0007669"/>
    <property type="project" value="UniProtKB-UniRule"/>
</dbReference>
<dbReference type="GO" id="GO:0015986">
    <property type="term" value="P:proton motive force-driven ATP synthesis"/>
    <property type="evidence" value="ECO:0000318"/>
    <property type="project" value="GO_Central"/>
</dbReference>
<dbReference type="CDD" id="cd12152">
    <property type="entry name" value="F1-ATPase_delta"/>
    <property type="match status" value="1"/>
</dbReference>
<dbReference type="FunFam" id="1.20.5.440:FF:000001">
    <property type="entry name" value="ATP synthase epsilon chain"/>
    <property type="match status" value="1"/>
</dbReference>
<dbReference type="FunFam" id="2.60.15.10:FF:000001">
    <property type="entry name" value="ATP synthase epsilon chain"/>
    <property type="match status" value="1"/>
</dbReference>
<dbReference type="Gene3D" id="1.20.5.440">
    <property type="entry name" value="ATP synthase delta/epsilon subunit, C-terminal domain"/>
    <property type="match status" value="1"/>
</dbReference>
<dbReference type="Gene3D" id="2.60.15.10">
    <property type="entry name" value="F0F1 ATP synthase delta/epsilon subunit, N-terminal"/>
    <property type="match status" value="1"/>
</dbReference>
<dbReference type="HAMAP" id="MF_00530">
    <property type="entry name" value="ATP_synth_epsil_bac"/>
    <property type="match status" value="1"/>
</dbReference>
<dbReference type="InterPro" id="IPR036794">
    <property type="entry name" value="ATP_F1_dsu/esu_C_sf"/>
</dbReference>
<dbReference type="InterPro" id="IPR001469">
    <property type="entry name" value="ATP_synth_F1_dsu/esu"/>
</dbReference>
<dbReference type="InterPro" id="IPR020546">
    <property type="entry name" value="ATP_synth_F1_dsu/esu_N"/>
</dbReference>
<dbReference type="InterPro" id="IPR020547">
    <property type="entry name" value="ATP_synth_F1_esu_C"/>
</dbReference>
<dbReference type="InterPro" id="IPR036771">
    <property type="entry name" value="ATPsynth_dsu/esu_N"/>
</dbReference>
<dbReference type="NCBIfam" id="TIGR01216">
    <property type="entry name" value="ATP_synt_epsi"/>
    <property type="match status" value="1"/>
</dbReference>
<dbReference type="NCBIfam" id="NF001846">
    <property type="entry name" value="PRK00571.1-3"/>
    <property type="match status" value="1"/>
</dbReference>
<dbReference type="NCBIfam" id="NF009980">
    <property type="entry name" value="PRK13446.1"/>
    <property type="match status" value="1"/>
</dbReference>
<dbReference type="PANTHER" id="PTHR13822">
    <property type="entry name" value="ATP SYNTHASE DELTA/EPSILON CHAIN"/>
    <property type="match status" value="1"/>
</dbReference>
<dbReference type="PANTHER" id="PTHR13822:SF10">
    <property type="entry name" value="ATP SYNTHASE EPSILON CHAIN, CHLOROPLASTIC"/>
    <property type="match status" value="1"/>
</dbReference>
<dbReference type="Pfam" id="PF00401">
    <property type="entry name" value="ATP-synt_DE"/>
    <property type="match status" value="1"/>
</dbReference>
<dbReference type="Pfam" id="PF02823">
    <property type="entry name" value="ATP-synt_DE_N"/>
    <property type="match status" value="1"/>
</dbReference>
<dbReference type="SUPFAM" id="SSF46604">
    <property type="entry name" value="Epsilon subunit of F1F0-ATP synthase C-terminal domain"/>
    <property type="match status" value="1"/>
</dbReference>
<dbReference type="SUPFAM" id="SSF51344">
    <property type="entry name" value="Epsilon subunit of F1F0-ATP synthase N-terminal domain"/>
    <property type="match status" value="1"/>
</dbReference>
<evidence type="ECO:0000255" key="1">
    <source>
        <dbReference type="HAMAP-Rule" id="MF_00530"/>
    </source>
</evidence>
<keyword id="KW-0066">ATP synthesis</keyword>
<keyword id="KW-1003">Cell membrane</keyword>
<keyword id="KW-0139">CF(1)</keyword>
<keyword id="KW-0375">Hydrogen ion transport</keyword>
<keyword id="KW-0406">Ion transport</keyword>
<keyword id="KW-0472">Membrane</keyword>
<keyword id="KW-1185">Reference proteome</keyword>
<keyword id="KW-0813">Transport</keyword>
<name>ATPE_STAA8</name>
<accession>Q2FWF1</accession>
<proteinExistence type="inferred from homology"/>
<feature type="chain" id="PRO_0000265899" description="ATP synthase epsilon chain">
    <location>
        <begin position="1"/>
        <end position="134"/>
    </location>
</feature>